<accession>A5CDP1</accession>
<dbReference type="EMBL" id="AM494475">
    <property type="protein sequence ID" value="CAM80013.1"/>
    <property type="molecule type" value="Genomic_DNA"/>
</dbReference>
<dbReference type="RefSeq" id="WP_011944714.1">
    <property type="nucleotide sequence ID" value="NC_009488.1"/>
</dbReference>
<dbReference type="SMR" id="A5CDP1"/>
<dbReference type="KEGG" id="ots:OTBS_0947"/>
<dbReference type="eggNOG" id="COG0231">
    <property type="taxonomic scope" value="Bacteria"/>
</dbReference>
<dbReference type="HOGENOM" id="CLU_074944_1_1_5"/>
<dbReference type="UniPathway" id="UPA00345"/>
<dbReference type="Proteomes" id="UP000001565">
    <property type="component" value="Chromosome"/>
</dbReference>
<dbReference type="GO" id="GO:0005737">
    <property type="term" value="C:cytoplasm"/>
    <property type="evidence" value="ECO:0007669"/>
    <property type="project" value="UniProtKB-SubCell"/>
</dbReference>
<dbReference type="GO" id="GO:0003746">
    <property type="term" value="F:translation elongation factor activity"/>
    <property type="evidence" value="ECO:0007669"/>
    <property type="project" value="UniProtKB-UniRule"/>
</dbReference>
<dbReference type="GO" id="GO:0043043">
    <property type="term" value="P:peptide biosynthetic process"/>
    <property type="evidence" value="ECO:0007669"/>
    <property type="project" value="InterPro"/>
</dbReference>
<dbReference type="CDD" id="cd04470">
    <property type="entry name" value="S1_EF-P_repeat_1"/>
    <property type="match status" value="1"/>
</dbReference>
<dbReference type="CDD" id="cd05794">
    <property type="entry name" value="S1_EF-P_repeat_2"/>
    <property type="match status" value="1"/>
</dbReference>
<dbReference type="FunFam" id="2.40.50.140:FF:000004">
    <property type="entry name" value="Elongation factor P"/>
    <property type="match status" value="1"/>
</dbReference>
<dbReference type="FunFam" id="2.40.50.140:FF:000009">
    <property type="entry name" value="Elongation factor P"/>
    <property type="match status" value="1"/>
</dbReference>
<dbReference type="Gene3D" id="2.30.30.30">
    <property type="match status" value="1"/>
</dbReference>
<dbReference type="Gene3D" id="2.40.50.140">
    <property type="entry name" value="Nucleic acid-binding proteins"/>
    <property type="match status" value="2"/>
</dbReference>
<dbReference type="HAMAP" id="MF_00141">
    <property type="entry name" value="EF_P"/>
    <property type="match status" value="1"/>
</dbReference>
<dbReference type="InterPro" id="IPR015365">
    <property type="entry name" value="Elong-fact-P_C"/>
</dbReference>
<dbReference type="InterPro" id="IPR012340">
    <property type="entry name" value="NA-bd_OB-fold"/>
</dbReference>
<dbReference type="InterPro" id="IPR014722">
    <property type="entry name" value="Rib_uL2_dom2"/>
</dbReference>
<dbReference type="InterPro" id="IPR020599">
    <property type="entry name" value="Transl_elong_fac_P/YeiP"/>
</dbReference>
<dbReference type="InterPro" id="IPR013185">
    <property type="entry name" value="Transl_elong_KOW-like"/>
</dbReference>
<dbReference type="InterPro" id="IPR001059">
    <property type="entry name" value="Transl_elong_P/YeiP_cen"/>
</dbReference>
<dbReference type="InterPro" id="IPR013852">
    <property type="entry name" value="Transl_elong_P/YeiP_CS"/>
</dbReference>
<dbReference type="InterPro" id="IPR011768">
    <property type="entry name" value="Transl_elongation_fac_P"/>
</dbReference>
<dbReference type="InterPro" id="IPR008991">
    <property type="entry name" value="Translation_prot_SH3-like_sf"/>
</dbReference>
<dbReference type="NCBIfam" id="TIGR00038">
    <property type="entry name" value="efp"/>
    <property type="match status" value="1"/>
</dbReference>
<dbReference type="NCBIfam" id="NF001810">
    <property type="entry name" value="PRK00529.1"/>
    <property type="match status" value="1"/>
</dbReference>
<dbReference type="PANTHER" id="PTHR30053">
    <property type="entry name" value="ELONGATION FACTOR P"/>
    <property type="match status" value="1"/>
</dbReference>
<dbReference type="PANTHER" id="PTHR30053:SF14">
    <property type="entry name" value="TRANSLATION ELONGATION FACTOR KOW-LIKE DOMAIN-CONTAINING PROTEIN"/>
    <property type="match status" value="1"/>
</dbReference>
<dbReference type="Pfam" id="PF01132">
    <property type="entry name" value="EFP"/>
    <property type="match status" value="1"/>
</dbReference>
<dbReference type="Pfam" id="PF08207">
    <property type="entry name" value="EFP_N"/>
    <property type="match status" value="1"/>
</dbReference>
<dbReference type="Pfam" id="PF09285">
    <property type="entry name" value="Elong-fact-P_C"/>
    <property type="match status" value="1"/>
</dbReference>
<dbReference type="PIRSF" id="PIRSF005901">
    <property type="entry name" value="EF-P"/>
    <property type="match status" value="1"/>
</dbReference>
<dbReference type="SMART" id="SM01185">
    <property type="entry name" value="EFP"/>
    <property type="match status" value="1"/>
</dbReference>
<dbReference type="SMART" id="SM00841">
    <property type="entry name" value="Elong-fact-P_C"/>
    <property type="match status" value="1"/>
</dbReference>
<dbReference type="SUPFAM" id="SSF50249">
    <property type="entry name" value="Nucleic acid-binding proteins"/>
    <property type="match status" value="2"/>
</dbReference>
<dbReference type="SUPFAM" id="SSF50104">
    <property type="entry name" value="Translation proteins SH3-like domain"/>
    <property type="match status" value="1"/>
</dbReference>
<dbReference type="PROSITE" id="PS01275">
    <property type="entry name" value="EFP"/>
    <property type="match status" value="1"/>
</dbReference>
<organism>
    <name type="scientific">Orientia tsutsugamushi (strain Boryong)</name>
    <name type="common">Rickettsia tsutsugamushi</name>
    <dbReference type="NCBI Taxonomy" id="357244"/>
    <lineage>
        <taxon>Bacteria</taxon>
        <taxon>Pseudomonadati</taxon>
        <taxon>Pseudomonadota</taxon>
        <taxon>Alphaproteobacteria</taxon>
        <taxon>Rickettsiales</taxon>
        <taxon>Rickettsiaceae</taxon>
        <taxon>Rickettsieae</taxon>
        <taxon>Orientia</taxon>
    </lineage>
</organism>
<evidence type="ECO:0000255" key="1">
    <source>
        <dbReference type="HAMAP-Rule" id="MF_00141"/>
    </source>
</evidence>
<gene>
    <name evidence="1" type="primary">efp</name>
    <name type="ordered locus">OTBS_0947</name>
</gene>
<proteinExistence type="inferred from homology"/>
<reference key="1">
    <citation type="journal article" date="2007" name="Proc. Natl. Acad. Sci. U.S.A.">
        <title>The Orientia tsutsugamushi genome reveals massive proliferation of conjugative type IV secretion system and host-cell interaction genes.</title>
        <authorList>
            <person name="Cho N.-H."/>
            <person name="Kim H.-R."/>
            <person name="Lee J.-H."/>
            <person name="Kim S.-Y."/>
            <person name="Kim J."/>
            <person name="Cha S."/>
            <person name="Kim S.-Y."/>
            <person name="Darby A.C."/>
            <person name="Fuxelius H.-H."/>
            <person name="Yin J."/>
            <person name="Kim J.H."/>
            <person name="Kim J."/>
            <person name="Lee S.J."/>
            <person name="Koh Y.-S."/>
            <person name="Jang W.-J."/>
            <person name="Park K.-H."/>
            <person name="Andersson S.G.E."/>
            <person name="Choi M.-S."/>
            <person name="Kim I.-S."/>
        </authorList>
    </citation>
    <scope>NUCLEOTIDE SEQUENCE [LARGE SCALE GENOMIC DNA]</scope>
    <source>
        <strain>Boryong</strain>
    </source>
</reference>
<feature type="chain" id="PRO_1000010798" description="Elongation factor P">
    <location>
        <begin position="1"/>
        <end position="189"/>
    </location>
</feature>
<sequence length="189" mass="21429">MKILANAIREGNILEYQNNLWIVSKKPDHTKPGKGGAYIQLEMKNLKTGTKIYERFSSSDYLEKATLEQRNYQYLYQENNHLVLMDLESFEQILVQKSIIASNKLPFLLENTVVTVETYKDEPIRLVLPHTVVVEILETSPNIKGATVTASYKPAILSNGAKIMVPPYLSAGEKIVVKLEDISFVERAK</sequence>
<keyword id="KW-0963">Cytoplasm</keyword>
<keyword id="KW-0251">Elongation factor</keyword>
<keyword id="KW-0648">Protein biosynthesis</keyword>
<keyword id="KW-1185">Reference proteome</keyword>
<comment type="function">
    <text evidence="1">Involved in peptide bond synthesis. Stimulates efficient translation and peptide-bond synthesis on native or reconstituted 70S ribosomes in vitro. Probably functions indirectly by altering the affinity of the ribosome for aminoacyl-tRNA, thus increasing their reactivity as acceptors for peptidyl transferase.</text>
</comment>
<comment type="pathway">
    <text evidence="1">Protein biosynthesis; polypeptide chain elongation.</text>
</comment>
<comment type="subcellular location">
    <subcellularLocation>
        <location evidence="1">Cytoplasm</location>
    </subcellularLocation>
</comment>
<comment type="similarity">
    <text evidence="1">Belongs to the elongation factor P family.</text>
</comment>
<protein>
    <recommendedName>
        <fullName evidence="1">Elongation factor P</fullName>
        <shortName evidence="1">EF-P</shortName>
    </recommendedName>
</protein>
<name>EFP_ORITB</name>